<reference key="1">
    <citation type="journal article" date="2005" name="J. Infect. Dis.">
        <title>Genome sequence of a serotype M28 strain of group A Streptococcus: potential new insights into puerperal sepsis and bacterial disease specificity.</title>
        <authorList>
            <person name="Green N.M."/>
            <person name="Zhang S."/>
            <person name="Porcella S.F."/>
            <person name="Nagiec M.J."/>
            <person name="Barbian K.D."/>
            <person name="Beres S.B."/>
            <person name="Lefebvre R.B."/>
            <person name="Musser J.M."/>
        </authorList>
    </citation>
    <scope>NUCLEOTIDE SEQUENCE [LARGE SCALE GENOMIC DNA]</scope>
    <source>
        <strain>MGAS6180</strain>
    </source>
</reference>
<keyword id="KW-0963">Cytoplasm</keyword>
<keyword id="KW-0274">FAD</keyword>
<keyword id="KW-0285">Flavoprotein</keyword>
<keyword id="KW-0520">NAD</keyword>
<keyword id="KW-0819">tRNA processing</keyword>
<comment type="function">
    <text evidence="1">NAD-binding protein involved in the addition of a carboxymethylaminomethyl (cmnm) group at the wobble position (U34) of certain tRNAs, forming tRNA-cmnm(5)s(2)U34.</text>
</comment>
<comment type="cofactor">
    <cofactor evidence="1">
        <name>FAD</name>
        <dbReference type="ChEBI" id="CHEBI:57692"/>
    </cofactor>
</comment>
<comment type="subunit">
    <text evidence="1">Homodimer. Heterotetramer of two MnmE and two MnmG subunits.</text>
</comment>
<comment type="subcellular location">
    <subcellularLocation>
        <location evidence="1">Cytoplasm</location>
    </subcellularLocation>
</comment>
<comment type="similarity">
    <text evidence="1">Belongs to the MnmG family.</text>
</comment>
<accession>Q48QN0</accession>
<protein>
    <recommendedName>
        <fullName evidence="1">tRNA uridine 5-carboxymethylaminomethyl modification enzyme MnmG</fullName>
    </recommendedName>
    <alternativeName>
        <fullName evidence="1">Glucose-inhibited division protein A</fullName>
    </alternativeName>
</protein>
<sequence>MTHEFTESYDVIVIGAGHAGVEASLATSRMGCKTLLATINLDMLAFMPCNPSIGGSAKGIVVREIDALGGEMGKNIDKTYIQMKMLNTGKGPAVRALRAQADKSLYAREMKHTVEKQANLTLRQTMIDDILVEDGRVVGVLTATGQKFAAKAVVVTTGTALRGEIILGELKYSSGPNNSLASVTLADNLKKLGLEIGRFKTGTPPRVKASSINYDQTEIQPGDDKPNHFSFMSKDAEYLKDQIPCWLTYTNQTSHDIINQNLYRAPMFSGIVKGVGPRYCPSIEDKIVRFADKERHQLFLEPEGRDTEEVYVQGLSTSLPEDVQKDLIHSIKGLEKAEMMRTGYAIEYDIVLPHQLRATLETKLISGLFTAGQTNGTSGYEEAAGQGLIAGINAALKVQGKPELILKRSDAYIGVMIDDLVTKGTLEPYRLLTSRAEYRLILRHDNADMRLTEIGRDIGLVDDERWKAFEIKKNQFDNELKRLNSIKLKPVKATNDRVQELGFKPLTDAMTAKEFMRRPEIDYATAVSFVGPAAEDLDAKIIELLETEIKYEGYIRKALDQVAKMKRMEEKRIPANIDWDAIDSIATEARQKFKKINPETIGQASRISGVNPADISILMIYLEGNGKAHRKY</sequence>
<gene>
    <name evidence="1" type="primary">mnmG</name>
    <name evidence="1" type="synonym">gidA</name>
    <name type="ordered locus">M28_Spy1870</name>
</gene>
<organism>
    <name type="scientific">Streptococcus pyogenes serotype M28 (strain MGAS6180)</name>
    <dbReference type="NCBI Taxonomy" id="319701"/>
    <lineage>
        <taxon>Bacteria</taxon>
        <taxon>Bacillati</taxon>
        <taxon>Bacillota</taxon>
        <taxon>Bacilli</taxon>
        <taxon>Lactobacillales</taxon>
        <taxon>Streptococcaceae</taxon>
        <taxon>Streptococcus</taxon>
    </lineage>
</organism>
<name>MNMG_STRPM</name>
<feature type="chain" id="PRO_1000016694" description="tRNA uridine 5-carboxymethylaminomethyl modification enzyme MnmG">
    <location>
        <begin position="1"/>
        <end position="632"/>
    </location>
</feature>
<feature type="binding site" evidence="1">
    <location>
        <begin position="15"/>
        <end position="20"/>
    </location>
    <ligand>
        <name>FAD</name>
        <dbReference type="ChEBI" id="CHEBI:57692"/>
    </ligand>
</feature>
<feature type="binding site" evidence="1">
    <location>
        <position position="127"/>
    </location>
    <ligand>
        <name>FAD</name>
        <dbReference type="ChEBI" id="CHEBI:57692"/>
    </ligand>
</feature>
<feature type="binding site" evidence="1">
    <location>
        <position position="182"/>
    </location>
    <ligand>
        <name>FAD</name>
        <dbReference type="ChEBI" id="CHEBI:57692"/>
    </ligand>
</feature>
<feature type="binding site" evidence="1">
    <location>
        <begin position="276"/>
        <end position="290"/>
    </location>
    <ligand>
        <name>NAD(+)</name>
        <dbReference type="ChEBI" id="CHEBI:57540"/>
    </ligand>
</feature>
<feature type="binding site" evidence="1">
    <location>
        <position position="373"/>
    </location>
    <ligand>
        <name>FAD</name>
        <dbReference type="ChEBI" id="CHEBI:57692"/>
    </ligand>
</feature>
<evidence type="ECO:0000255" key="1">
    <source>
        <dbReference type="HAMAP-Rule" id="MF_00129"/>
    </source>
</evidence>
<proteinExistence type="inferred from homology"/>
<dbReference type="EMBL" id="CP000056">
    <property type="protein sequence ID" value="AAX72980.1"/>
    <property type="molecule type" value="Genomic_DNA"/>
</dbReference>
<dbReference type="RefSeq" id="WP_011285326.1">
    <property type="nucleotide sequence ID" value="NC_007296.2"/>
</dbReference>
<dbReference type="SMR" id="Q48QN0"/>
<dbReference type="KEGG" id="spb:M28_Spy1870"/>
<dbReference type="HOGENOM" id="CLU_007831_2_2_9"/>
<dbReference type="GO" id="GO:0005829">
    <property type="term" value="C:cytosol"/>
    <property type="evidence" value="ECO:0007669"/>
    <property type="project" value="TreeGrafter"/>
</dbReference>
<dbReference type="GO" id="GO:0050660">
    <property type="term" value="F:flavin adenine dinucleotide binding"/>
    <property type="evidence" value="ECO:0007669"/>
    <property type="project" value="UniProtKB-UniRule"/>
</dbReference>
<dbReference type="GO" id="GO:0030488">
    <property type="term" value="P:tRNA methylation"/>
    <property type="evidence" value="ECO:0007669"/>
    <property type="project" value="TreeGrafter"/>
</dbReference>
<dbReference type="GO" id="GO:0002098">
    <property type="term" value="P:tRNA wobble uridine modification"/>
    <property type="evidence" value="ECO:0007669"/>
    <property type="project" value="InterPro"/>
</dbReference>
<dbReference type="FunFam" id="1.10.10.1800:FF:000001">
    <property type="entry name" value="tRNA uridine 5-carboxymethylaminomethyl modification enzyme MnmG"/>
    <property type="match status" value="1"/>
</dbReference>
<dbReference type="FunFam" id="1.10.150.570:FF:000001">
    <property type="entry name" value="tRNA uridine 5-carboxymethylaminomethyl modification enzyme MnmG"/>
    <property type="match status" value="1"/>
</dbReference>
<dbReference type="FunFam" id="3.50.50.60:FF:000002">
    <property type="entry name" value="tRNA uridine 5-carboxymethylaminomethyl modification enzyme MnmG"/>
    <property type="match status" value="1"/>
</dbReference>
<dbReference type="FunFam" id="3.50.50.60:FF:000063">
    <property type="entry name" value="tRNA uridine 5-carboxymethylaminomethyl modification enzyme MnmG"/>
    <property type="match status" value="1"/>
</dbReference>
<dbReference type="Gene3D" id="3.50.50.60">
    <property type="entry name" value="FAD/NAD(P)-binding domain"/>
    <property type="match status" value="2"/>
</dbReference>
<dbReference type="Gene3D" id="1.10.150.570">
    <property type="entry name" value="GidA associated domain, C-terminal subdomain"/>
    <property type="match status" value="1"/>
</dbReference>
<dbReference type="Gene3D" id="1.10.10.1800">
    <property type="entry name" value="tRNA uridine 5-carboxymethylaminomethyl modification enzyme MnmG/GidA"/>
    <property type="match status" value="1"/>
</dbReference>
<dbReference type="HAMAP" id="MF_00129">
    <property type="entry name" value="MnmG_GidA"/>
    <property type="match status" value="1"/>
</dbReference>
<dbReference type="InterPro" id="IPR036188">
    <property type="entry name" value="FAD/NAD-bd_sf"/>
</dbReference>
<dbReference type="InterPro" id="IPR049312">
    <property type="entry name" value="GIDA_C_N"/>
</dbReference>
<dbReference type="InterPro" id="IPR004416">
    <property type="entry name" value="MnmG"/>
</dbReference>
<dbReference type="InterPro" id="IPR002218">
    <property type="entry name" value="MnmG-rel"/>
</dbReference>
<dbReference type="InterPro" id="IPR020595">
    <property type="entry name" value="MnmG-rel_CS"/>
</dbReference>
<dbReference type="InterPro" id="IPR026904">
    <property type="entry name" value="MnmG_C"/>
</dbReference>
<dbReference type="InterPro" id="IPR047001">
    <property type="entry name" value="MnmG_C_subdom"/>
</dbReference>
<dbReference type="InterPro" id="IPR044920">
    <property type="entry name" value="MnmG_C_subdom_sf"/>
</dbReference>
<dbReference type="InterPro" id="IPR040131">
    <property type="entry name" value="MnmG_N"/>
</dbReference>
<dbReference type="NCBIfam" id="TIGR00136">
    <property type="entry name" value="mnmG_gidA"/>
    <property type="match status" value="1"/>
</dbReference>
<dbReference type="PANTHER" id="PTHR11806">
    <property type="entry name" value="GLUCOSE INHIBITED DIVISION PROTEIN A"/>
    <property type="match status" value="1"/>
</dbReference>
<dbReference type="PANTHER" id="PTHR11806:SF0">
    <property type="entry name" value="PROTEIN MTO1 HOMOLOG, MITOCHONDRIAL"/>
    <property type="match status" value="1"/>
</dbReference>
<dbReference type="Pfam" id="PF01134">
    <property type="entry name" value="GIDA"/>
    <property type="match status" value="1"/>
</dbReference>
<dbReference type="Pfam" id="PF21680">
    <property type="entry name" value="GIDA_C_1st"/>
    <property type="match status" value="1"/>
</dbReference>
<dbReference type="Pfam" id="PF13932">
    <property type="entry name" value="SAM_GIDA_C"/>
    <property type="match status" value="1"/>
</dbReference>
<dbReference type="PRINTS" id="PR00411">
    <property type="entry name" value="PNDRDTASEI"/>
</dbReference>
<dbReference type="SMART" id="SM01228">
    <property type="entry name" value="GIDA_assoc_3"/>
    <property type="match status" value="1"/>
</dbReference>
<dbReference type="SUPFAM" id="SSF51905">
    <property type="entry name" value="FAD/NAD(P)-binding domain"/>
    <property type="match status" value="1"/>
</dbReference>
<dbReference type="PROSITE" id="PS01280">
    <property type="entry name" value="GIDA_1"/>
    <property type="match status" value="1"/>
</dbReference>
<dbReference type="PROSITE" id="PS01281">
    <property type="entry name" value="GIDA_2"/>
    <property type="match status" value="1"/>
</dbReference>